<organism>
    <name type="scientific">Candida albicans</name>
    <name type="common">Yeast</name>
    <dbReference type="NCBI Taxonomy" id="5476"/>
    <lineage>
        <taxon>Eukaryota</taxon>
        <taxon>Fungi</taxon>
        <taxon>Dikarya</taxon>
        <taxon>Ascomycota</taxon>
        <taxon>Saccharomycotina</taxon>
        <taxon>Pichiomycetes</taxon>
        <taxon>Debaryomycetaceae</taxon>
        <taxon>Candida/Lodderomyces clade</taxon>
        <taxon>Candida</taxon>
    </lineage>
</organism>
<dbReference type="EC" id="3.2.1.14"/>
<dbReference type="EMBL" id="U36490">
    <property type="protein sequence ID" value="AAC49409.2"/>
    <property type="molecule type" value="Genomic_DNA"/>
</dbReference>
<dbReference type="SMR" id="P46876"/>
<dbReference type="CAZy" id="GH18">
    <property type="family name" value="Glycoside Hydrolase Family 18"/>
</dbReference>
<dbReference type="GlyCosmos" id="P46876">
    <property type="glycosylation" value="1 site, No reported glycans"/>
</dbReference>
<dbReference type="VEuPathDB" id="FungiDB:CAWG_04786"/>
<dbReference type="VEuPathDB" id="FungiDB:CR_00180C_A"/>
<dbReference type="GO" id="GO:0005935">
    <property type="term" value="C:cellular bud neck"/>
    <property type="evidence" value="ECO:0007669"/>
    <property type="project" value="EnsemblFungi"/>
</dbReference>
<dbReference type="GO" id="GO:0005576">
    <property type="term" value="C:extracellular region"/>
    <property type="evidence" value="ECO:0007669"/>
    <property type="project" value="UniProtKB-SubCell"/>
</dbReference>
<dbReference type="GO" id="GO:0009277">
    <property type="term" value="C:fungal-type cell wall"/>
    <property type="evidence" value="ECO:0007669"/>
    <property type="project" value="EnsemblFungi"/>
</dbReference>
<dbReference type="GO" id="GO:0008061">
    <property type="term" value="F:chitin binding"/>
    <property type="evidence" value="ECO:0007669"/>
    <property type="project" value="UniProtKB-KW"/>
</dbReference>
<dbReference type="GO" id="GO:0008843">
    <property type="term" value="F:endochitinase activity"/>
    <property type="evidence" value="ECO:0007669"/>
    <property type="project" value="UniProtKB-EC"/>
</dbReference>
<dbReference type="GO" id="GO:0006032">
    <property type="term" value="P:chitin catabolic process"/>
    <property type="evidence" value="ECO:0007669"/>
    <property type="project" value="UniProtKB-KW"/>
</dbReference>
<dbReference type="GO" id="GO:0000272">
    <property type="term" value="P:polysaccharide catabolic process"/>
    <property type="evidence" value="ECO:0007669"/>
    <property type="project" value="UniProtKB-KW"/>
</dbReference>
<dbReference type="GO" id="GO:0000920">
    <property type="term" value="P:septum digestion after cytokinesis"/>
    <property type="evidence" value="ECO:0007669"/>
    <property type="project" value="EnsemblFungi"/>
</dbReference>
<dbReference type="CDD" id="cd02877">
    <property type="entry name" value="GH18_hevamine_XipI_class_III"/>
    <property type="match status" value="1"/>
</dbReference>
<dbReference type="FunFam" id="3.20.20.80:FF:000125">
    <property type="entry name" value="CTS1p Endochitinase"/>
    <property type="match status" value="1"/>
</dbReference>
<dbReference type="Gene3D" id="3.20.20.80">
    <property type="entry name" value="Glycosidases"/>
    <property type="match status" value="1"/>
</dbReference>
<dbReference type="InterPro" id="IPR045321">
    <property type="entry name" value="Cts1-like"/>
</dbReference>
<dbReference type="InterPro" id="IPR001223">
    <property type="entry name" value="Glyco_hydro18_cat"/>
</dbReference>
<dbReference type="InterPro" id="IPR001579">
    <property type="entry name" value="Glyco_hydro_18_chit_AS"/>
</dbReference>
<dbReference type="InterPro" id="IPR017853">
    <property type="entry name" value="Glycoside_hydrolase_SF"/>
</dbReference>
<dbReference type="InterPro" id="IPR050542">
    <property type="entry name" value="Glycosyl_Hydrlase18_Chitinase"/>
</dbReference>
<dbReference type="PANTHER" id="PTHR45708">
    <property type="entry name" value="ENDOCHITINASE"/>
    <property type="match status" value="1"/>
</dbReference>
<dbReference type="PANTHER" id="PTHR45708:SF49">
    <property type="entry name" value="ENDOCHITINASE"/>
    <property type="match status" value="1"/>
</dbReference>
<dbReference type="Pfam" id="PF00704">
    <property type="entry name" value="Glyco_hydro_18"/>
    <property type="match status" value="1"/>
</dbReference>
<dbReference type="SUPFAM" id="SSF51445">
    <property type="entry name" value="(Trans)glycosidases"/>
    <property type="match status" value="1"/>
</dbReference>
<dbReference type="PROSITE" id="PS01095">
    <property type="entry name" value="GH18_1"/>
    <property type="match status" value="1"/>
</dbReference>
<dbReference type="PROSITE" id="PS51910">
    <property type="entry name" value="GH18_2"/>
    <property type="match status" value="1"/>
</dbReference>
<reference key="1">
    <citation type="journal article" date="1996" name="Yeast">
        <title>Molecular cloning of a third chitinase gene (CHT1) from Candida albicans.</title>
        <authorList>
            <person name="McCreath K.J."/>
            <person name="Specht C.A."/>
            <person name="Liu Y."/>
            <person name="Robbins P.W."/>
        </authorList>
    </citation>
    <scope>NUCLEOTIDE SEQUENCE [GENOMIC DNA]</scope>
    <source>
        <strain>ATCC 10261 / CBS 2718 / NBRC 1061 / FMJ 1011</strain>
    </source>
</reference>
<reference key="2">
    <citation type="submission" date="2001-09" db="EMBL/GenBank/DDBJ databases">
        <authorList>
            <person name="Specht C.A."/>
        </authorList>
    </citation>
    <scope>SEQUENCE REVISION TO C-TERMINUS</scope>
</reference>
<comment type="catalytic activity">
    <reaction>
        <text>Random endo-hydrolysis of N-acetyl-beta-D-glucosaminide (1-&gt;4)-beta-linkages in chitin and chitodextrins.</text>
        <dbReference type="EC" id="3.2.1.14"/>
    </reaction>
</comment>
<comment type="subcellular location">
    <subcellularLocation>
        <location evidence="3">Secreted</location>
    </subcellularLocation>
</comment>
<comment type="similarity">
    <text evidence="3">Belongs to the glycosyl hydrolase 18 family. Chitinase class III subfamily.</text>
</comment>
<feature type="signal peptide" evidence="1">
    <location>
        <begin position="1"/>
        <end position="17"/>
    </location>
</feature>
<feature type="chain" id="PRO_0000011924" description="Chitinase 1">
    <location>
        <begin position="18"/>
        <end position="462"/>
    </location>
</feature>
<feature type="domain" description="GH18" evidence="2">
    <location>
        <begin position="18"/>
        <end position="291"/>
    </location>
</feature>
<feature type="active site" description="Proton donor" evidence="2">
    <location>
        <position position="147"/>
    </location>
</feature>
<feature type="glycosylation site" description="N-linked (GlcNAc...) asparagine" evidence="1">
    <location>
        <position position="57"/>
    </location>
</feature>
<proteinExistence type="inferred from homology"/>
<protein>
    <recommendedName>
        <fullName>Chitinase 1</fullName>
        <ecNumber>3.2.1.14</ecNumber>
    </recommendedName>
</protein>
<gene>
    <name type="primary">CHT1</name>
</gene>
<keyword id="KW-0119">Carbohydrate metabolism</keyword>
<keyword id="KW-0146">Chitin degradation</keyword>
<keyword id="KW-0147">Chitin-binding</keyword>
<keyword id="KW-0325">Glycoprotein</keyword>
<keyword id="KW-0326">Glycosidase</keyword>
<keyword id="KW-0378">Hydrolase</keyword>
<keyword id="KW-0624">Polysaccharide degradation</keyword>
<keyword id="KW-0964">Secreted</keyword>
<keyword id="KW-0732">Signal</keyword>
<name>CHI1_CANAX</name>
<sequence>MILNLIILLAISIVASASNIAAYWGQNAGGDQQTLGDYCSSSPASIIILSFLDGFPNLSLNFANQCSGTFSSGLAHCSQIGSDIKSCQQQGKTILLSLGGATGNYGFSSDSEAVQFAGTLWNKFGGGKDSERPFDDAIVDGFDFDIENKDQTGYAALATQLRKYFSTGTKSYYLSAAPQCPYPDESVGDLMSQVDLDFAFIQFYNNYCSLNQQFNWNSWSNYARGKSIKLYLGLPGSSSSAGSGFVGLSTVQRVVASIKGDSSFGGISIWDISSAENGGYLNQLYQALSGSGSPAAPSNSYQPNTPLTRTYGGSTATASAYISVGFTAGATHGSTTTNDLLAWIDSLFGSSQSSVQQYATPVQSVTATPQPVAATTTSAPKPTASAFNWFGWFDGTTTSTTLQTVYSTVPADQTVYVTLTTTVGSQMLQSLFDKRDVIAEAKSTNLQICWLLFIPLLALICS</sequence>
<evidence type="ECO:0000255" key="1"/>
<evidence type="ECO:0000255" key="2">
    <source>
        <dbReference type="PROSITE-ProRule" id="PRU01258"/>
    </source>
</evidence>
<evidence type="ECO:0000305" key="3"/>
<accession>P46876</accession>